<reference key="1">
    <citation type="journal article" date="2009" name="Stand. Genomic Sci.">
        <title>Complete genome sequence of Methanoculleus marisnigri Romesser et al. 1981 type strain JR1.</title>
        <authorList>
            <person name="Anderson I.J."/>
            <person name="Sieprawska-Lupa M."/>
            <person name="Lapidus A."/>
            <person name="Nolan M."/>
            <person name="Copeland A."/>
            <person name="Glavina Del Rio T."/>
            <person name="Tice H."/>
            <person name="Dalin E."/>
            <person name="Barry K."/>
            <person name="Saunders E."/>
            <person name="Han C."/>
            <person name="Brettin T."/>
            <person name="Detter J.C."/>
            <person name="Bruce D."/>
            <person name="Mikhailova N."/>
            <person name="Pitluck S."/>
            <person name="Hauser L."/>
            <person name="Land M."/>
            <person name="Lucas S."/>
            <person name="Richardson P."/>
            <person name="Whitman W.B."/>
            <person name="Kyrpides N.C."/>
        </authorList>
    </citation>
    <scope>NUCLEOTIDE SEQUENCE [LARGE SCALE GENOMIC DNA]</scope>
    <source>
        <strain>ATCC 35101 / DSM 1498 / JR1</strain>
    </source>
</reference>
<organism>
    <name type="scientific">Methanoculleus marisnigri (strain ATCC 35101 / DSM 1498 / JR1)</name>
    <dbReference type="NCBI Taxonomy" id="368407"/>
    <lineage>
        <taxon>Archaea</taxon>
        <taxon>Methanobacteriati</taxon>
        <taxon>Methanobacteriota</taxon>
        <taxon>Stenosarchaea group</taxon>
        <taxon>Methanomicrobia</taxon>
        <taxon>Methanomicrobiales</taxon>
        <taxon>Methanomicrobiaceae</taxon>
        <taxon>Methanoculleus</taxon>
    </lineage>
</organism>
<dbReference type="EC" id="2.7.1.50" evidence="1"/>
<dbReference type="EMBL" id="CP000562">
    <property type="protein sequence ID" value="ABN56196.1"/>
    <property type="molecule type" value="Genomic_DNA"/>
</dbReference>
<dbReference type="RefSeq" id="WP_011843117.1">
    <property type="nucleotide sequence ID" value="NC_009051.1"/>
</dbReference>
<dbReference type="SMR" id="A3CS46"/>
<dbReference type="STRING" id="368407.Memar_0262"/>
<dbReference type="GeneID" id="4847849"/>
<dbReference type="GeneID" id="76730839"/>
<dbReference type="KEGG" id="mem:Memar_0262"/>
<dbReference type="eggNOG" id="arCOG00019">
    <property type="taxonomic scope" value="Archaea"/>
</dbReference>
<dbReference type="HOGENOM" id="CLU_019943_0_1_2"/>
<dbReference type="OrthoDB" id="214286at2157"/>
<dbReference type="UniPathway" id="UPA00060">
    <property type="reaction ID" value="UER00139"/>
</dbReference>
<dbReference type="Proteomes" id="UP000002146">
    <property type="component" value="Chromosome"/>
</dbReference>
<dbReference type="GO" id="GO:0005524">
    <property type="term" value="F:ATP binding"/>
    <property type="evidence" value="ECO:0007669"/>
    <property type="project" value="UniProtKB-UniRule"/>
</dbReference>
<dbReference type="GO" id="GO:0004417">
    <property type="term" value="F:hydroxyethylthiazole kinase activity"/>
    <property type="evidence" value="ECO:0007669"/>
    <property type="project" value="UniProtKB-UniRule"/>
</dbReference>
<dbReference type="GO" id="GO:0000287">
    <property type="term" value="F:magnesium ion binding"/>
    <property type="evidence" value="ECO:0007669"/>
    <property type="project" value="UniProtKB-UniRule"/>
</dbReference>
<dbReference type="GO" id="GO:0009228">
    <property type="term" value="P:thiamine biosynthetic process"/>
    <property type="evidence" value="ECO:0007669"/>
    <property type="project" value="UniProtKB-KW"/>
</dbReference>
<dbReference type="GO" id="GO:0009229">
    <property type="term" value="P:thiamine diphosphate biosynthetic process"/>
    <property type="evidence" value="ECO:0007669"/>
    <property type="project" value="UniProtKB-UniRule"/>
</dbReference>
<dbReference type="CDD" id="cd01170">
    <property type="entry name" value="THZ_kinase"/>
    <property type="match status" value="1"/>
</dbReference>
<dbReference type="Gene3D" id="3.40.1190.20">
    <property type="match status" value="1"/>
</dbReference>
<dbReference type="HAMAP" id="MF_00228">
    <property type="entry name" value="Thz_kinase"/>
    <property type="match status" value="1"/>
</dbReference>
<dbReference type="InterPro" id="IPR000417">
    <property type="entry name" value="Hyethyz_kinase"/>
</dbReference>
<dbReference type="InterPro" id="IPR029056">
    <property type="entry name" value="Ribokinase-like"/>
</dbReference>
<dbReference type="NCBIfam" id="NF006830">
    <property type="entry name" value="PRK09355.1"/>
    <property type="match status" value="1"/>
</dbReference>
<dbReference type="NCBIfam" id="TIGR00694">
    <property type="entry name" value="thiM"/>
    <property type="match status" value="1"/>
</dbReference>
<dbReference type="Pfam" id="PF02110">
    <property type="entry name" value="HK"/>
    <property type="match status" value="1"/>
</dbReference>
<dbReference type="PIRSF" id="PIRSF000513">
    <property type="entry name" value="Thz_kinase"/>
    <property type="match status" value="1"/>
</dbReference>
<dbReference type="PRINTS" id="PR01099">
    <property type="entry name" value="HYETHTZKNASE"/>
</dbReference>
<dbReference type="SUPFAM" id="SSF53613">
    <property type="entry name" value="Ribokinase-like"/>
    <property type="match status" value="1"/>
</dbReference>
<accession>A3CS46</accession>
<comment type="function">
    <text evidence="1">Catalyzes the phosphorylation of the hydroxyl group of 4-methyl-5-beta-hydroxyethylthiazole (THZ).</text>
</comment>
<comment type="catalytic activity">
    <reaction evidence="1">
        <text>5-(2-hydroxyethyl)-4-methylthiazole + ATP = 4-methyl-5-(2-phosphooxyethyl)-thiazole + ADP + H(+)</text>
        <dbReference type="Rhea" id="RHEA:24212"/>
        <dbReference type="ChEBI" id="CHEBI:15378"/>
        <dbReference type="ChEBI" id="CHEBI:17957"/>
        <dbReference type="ChEBI" id="CHEBI:30616"/>
        <dbReference type="ChEBI" id="CHEBI:58296"/>
        <dbReference type="ChEBI" id="CHEBI:456216"/>
        <dbReference type="EC" id="2.7.1.50"/>
    </reaction>
</comment>
<comment type="cofactor">
    <cofactor evidence="1">
        <name>Mg(2+)</name>
        <dbReference type="ChEBI" id="CHEBI:18420"/>
    </cofactor>
</comment>
<comment type="pathway">
    <text evidence="1">Cofactor biosynthesis; thiamine diphosphate biosynthesis; 4-methyl-5-(2-phosphoethyl)-thiazole from 5-(2-hydroxyethyl)-4-methylthiazole: step 1/1.</text>
</comment>
<comment type="similarity">
    <text evidence="1">Belongs to the Thz kinase family.</text>
</comment>
<proteinExistence type="inferred from homology"/>
<keyword id="KW-0067">ATP-binding</keyword>
<keyword id="KW-0418">Kinase</keyword>
<keyword id="KW-0460">Magnesium</keyword>
<keyword id="KW-0479">Metal-binding</keyword>
<keyword id="KW-0547">Nucleotide-binding</keyword>
<keyword id="KW-0784">Thiamine biosynthesis</keyword>
<keyword id="KW-0808">Transferase</keyword>
<protein>
    <recommendedName>
        <fullName evidence="1">Hydroxyethylthiazole kinase</fullName>
        <ecNumber evidence="1">2.7.1.50</ecNumber>
    </recommendedName>
    <alternativeName>
        <fullName evidence="1">4-methyl-5-beta-hydroxyethylthiazole kinase</fullName>
        <shortName evidence="1">TH kinase</shortName>
        <shortName evidence="1">Thz kinase</shortName>
    </alternativeName>
</protein>
<sequence>MPDNTREGSSARFVDGAIPAGLLAAVRSQRPLVHHITNGVTINDCANITICAGAAPVMAEAPEEVAGMVAAAGALVLNIGTLSAAQVEAMLIAGRRANELGIPVVLDPVGVGATEFRTATARKLLDTLDIAVLKGNAGEIGVLAGTGGSVRGVDSGGVAGDPVETARECARSTGTVVSMTGAVDVVTDGSRVFLVGNGNPAMDRLSGTGCMASSVTAAFVAVAEDYAVASAAALAAFGLAGEWGAAGARGPYTFRTALFDELAGLSPDDLAGHARIEER</sequence>
<evidence type="ECO:0000255" key="1">
    <source>
        <dbReference type="HAMAP-Rule" id="MF_00228"/>
    </source>
</evidence>
<feature type="chain" id="PRO_0000383916" description="Hydroxyethylthiazole kinase">
    <location>
        <begin position="1"/>
        <end position="279"/>
    </location>
</feature>
<feature type="binding site" evidence="1">
    <location>
        <position position="58"/>
    </location>
    <ligand>
        <name>substrate</name>
    </ligand>
</feature>
<feature type="binding site" evidence="1">
    <location>
        <position position="134"/>
    </location>
    <ligand>
        <name>ATP</name>
        <dbReference type="ChEBI" id="CHEBI:30616"/>
    </ligand>
</feature>
<feature type="binding site" evidence="1">
    <location>
        <position position="180"/>
    </location>
    <ligand>
        <name>ATP</name>
        <dbReference type="ChEBI" id="CHEBI:30616"/>
    </ligand>
</feature>
<feature type="binding site" evidence="1">
    <location>
        <position position="207"/>
    </location>
    <ligand>
        <name>substrate</name>
    </ligand>
</feature>
<name>THIM_METMJ</name>
<gene>
    <name evidence="1" type="primary">thiM</name>
    <name type="ordered locus">Memar_0262</name>
</gene>